<organism>
    <name type="scientific">Leptospira borgpetersenii serovar Hardjo-bovis (strain L550)</name>
    <dbReference type="NCBI Taxonomy" id="355276"/>
    <lineage>
        <taxon>Bacteria</taxon>
        <taxon>Pseudomonadati</taxon>
        <taxon>Spirochaetota</taxon>
        <taxon>Spirochaetia</taxon>
        <taxon>Leptospirales</taxon>
        <taxon>Leptospiraceae</taxon>
        <taxon>Leptospira</taxon>
    </lineage>
</organism>
<feature type="chain" id="PRO_1000020882" description="Protease HtpX homolog">
    <location>
        <begin position="1"/>
        <end position="295"/>
    </location>
</feature>
<feature type="transmembrane region" description="Helical" evidence="1">
    <location>
        <begin position="6"/>
        <end position="26"/>
    </location>
</feature>
<feature type="transmembrane region" description="Helical" evidence="1">
    <location>
        <begin position="40"/>
        <end position="60"/>
    </location>
</feature>
<feature type="transmembrane region" description="Helical" evidence="1">
    <location>
        <begin position="163"/>
        <end position="183"/>
    </location>
</feature>
<feature type="transmembrane region" description="Helical" evidence="1">
    <location>
        <begin position="198"/>
        <end position="218"/>
    </location>
</feature>
<feature type="active site" evidence="1">
    <location>
        <position position="149"/>
    </location>
</feature>
<feature type="binding site" evidence="1">
    <location>
        <position position="148"/>
    </location>
    <ligand>
        <name>Zn(2+)</name>
        <dbReference type="ChEBI" id="CHEBI:29105"/>
        <note>catalytic</note>
    </ligand>
</feature>
<feature type="binding site" evidence="1">
    <location>
        <position position="152"/>
    </location>
    <ligand>
        <name>Zn(2+)</name>
        <dbReference type="ChEBI" id="CHEBI:29105"/>
        <note>catalytic</note>
    </ligand>
</feature>
<feature type="binding site" evidence="1">
    <location>
        <position position="223"/>
    </location>
    <ligand>
        <name>Zn(2+)</name>
        <dbReference type="ChEBI" id="CHEBI:29105"/>
        <note>catalytic</note>
    </ligand>
</feature>
<keyword id="KW-0997">Cell inner membrane</keyword>
<keyword id="KW-1003">Cell membrane</keyword>
<keyword id="KW-0378">Hydrolase</keyword>
<keyword id="KW-0472">Membrane</keyword>
<keyword id="KW-0479">Metal-binding</keyword>
<keyword id="KW-0482">Metalloprotease</keyword>
<keyword id="KW-0645">Protease</keyword>
<keyword id="KW-0812">Transmembrane</keyword>
<keyword id="KW-1133">Transmembrane helix</keyword>
<keyword id="KW-0862">Zinc</keyword>
<sequence length="295" mass="32234">MWFKRIGLFLLTNILVVVTISIVTSVLGIGPYLDANGLNLSSLVIFCFLWGMGGAFVSLLLSKFMAKMMMGVQIIDPRSASGAERELYSRVERLARAANLPMPEVGIYHSPEVNAFATGPSKSSSLVAVSSGLLQVMDNAEVEGVLAHELAHVANGDMVTMTLIQGIVNAFVMFFSRIISYALSTMVKDEMQYTVRLISNIVLSILFSILGSIVVAYFSRTREYRADAGGAKLVGRQNMIAALEKLRRTFDAPEDERGKEALATMKISGHNKWMALFSTHPPLEARIAALKNSGY</sequence>
<name>HTPX_LEPBL</name>
<dbReference type="EC" id="3.4.24.-" evidence="1"/>
<dbReference type="EMBL" id="CP000349">
    <property type="protein sequence ID" value="ABJ80501.1"/>
    <property type="molecule type" value="Genomic_DNA"/>
</dbReference>
<dbReference type="RefSeq" id="WP_002726085.1">
    <property type="nucleotide sequence ID" value="NC_008509.1"/>
</dbReference>
<dbReference type="SMR" id="Q04WP4"/>
<dbReference type="GeneID" id="61175568"/>
<dbReference type="KEGG" id="lbl:LBL_4186"/>
<dbReference type="HOGENOM" id="CLU_042266_1_0_12"/>
<dbReference type="GO" id="GO:0005886">
    <property type="term" value="C:plasma membrane"/>
    <property type="evidence" value="ECO:0007669"/>
    <property type="project" value="UniProtKB-SubCell"/>
</dbReference>
<dbReference type="GO" id="GO:0004222">
    <property type="term" value="F:metalloendopeptidase activity"/>
    <property type="evidence" value="ECO:0007669"/>
    <property type="project" value="UniProtKB-UniRule"/>
</dbReference>
<dbReference type="GO" id="GO:0008270">
    <property type="term" value="F:zinc ion binding"/>
    <property type="evidence" value="ECO:0007669"/>
    <property type="project" value="UniProtKB-UniRule"/>
</dbReference>
<dbReference type="GO" id="GO:0006508">
    <property type="term" value="P:proteolysis"/>
    <property type="evidence" value="ECO:0007669"/>
    <property type="project" value="UniProtKB-KW"/>
</dbReference>
<dbReference type="CDD" id="cd07335">
    <property type="entry name" value="M48B_HtpX_like"/>
    <property type="match status" value="1"/>
</dbReference>
<dbReference type="Gene3D" id="3.30.2010.10">
    <property type="entry name" value="Metalloproteases ('zincins'), catalytic domain"/>
    <property type="match status" value="1"/>
</dbReference>
<dbReference type="HAMAP" id="MF_00188">
    <property type="entry name" value="Pept_M48_protease_HtpX"/>
    <property type="match status" value="1"/>
</dbReference>
<dbReference type="InterPro" id="IPR050083">
    <property type="entry name" value="HtpX_protease"/>
</dbReference>
<dbReference type="InterPro" id="IPR022919">
    <property type="entry name" value="Pept_M48_protease_HtpX"/>
</dbReference>
<dbReference type="InterPro" id="IPR001915">
    <property type="entry name" value="Peptidase_M48"/>
</dbReference>
<dbReference type="NCBIfam" id="NF003965">
    <property type="entry name" value="PRK05457.1"/>
    <property type="match status" value="1"/>
</dbReference>
<dbReference type="PANTHER" id="PTHR43221">
    <property type="entry name" value="PROTEASE HTPX"/>
    <property type="match status" value="1"/>
</dbReference>
<dbReference type="PANTHER" id="PTHR43221:SF1">
    <property type="entry name" value="PROTEASE HTPX"/>
    <property type="match status" value="1"/>
</dbReference>
<dbReference type="Pfam" id="PF01435">
    <property type="entry name" value="Peptidase_M48"/>
    <property type="match status" value="1"/>
</dbReference>
<evidence type="ECO:0000255" key="1">
    <source>
        <dbReference type="HAMAP-Rule" id="MF_00188"/>
    </source>
</evidence>
<protein>
    <recommendedName>
        <fullName evidence="1">Protease HtpX homolog</fullName>
        <ecNumber evidence="1">3.4.24.-</ecNumber>
    </recommendedName>
</protein>
<comment type="cofactor">
    <cofactor evidence="1">
        <name>Zn(2+)</name>
        <dbReference type="ChEBI" id="CHEBI:29105"/>
    </cofactor>
    <text evidence="1">Binds 1 zinc ion per subunit.</text>
</comment>
<comment type="subcellular location">
    <subcellularLocation>
        <location evidence="1">Cell inner membrane</location>
        <topology evidence="1">Multi-pass membrane protein</topology>
    </subcellularLocation>
</comment>
<comment type="similarity">
    <text evidence="1">Belongs to the peptidase M48B family.</text>
</comment>
<proteinExistence type="inferred from homology"/>
<reference key="1">
    <citation type="journal article" date="2006" name="Proc. Natl. Acad. Sci. U.S.A.">
        <title>Genome reduction in Leptospira borgpetersenii reflects limited transmission potential.</title>
        <authorList>
            <person name="Bulach D.M."/>
            <person name="Zuerner R.L."/>
            <person name="Wilson P."/>
            <person name="Seemann T."/>
            <person name="McGrath A."/>
            <person name="Cullen P.A."/>
            <person name="Davis J."/>
            <person name="Johnson M."/>
            <person name="Kuczek E."/>
            <person name="Alt D.P."/>
            <person name="Peterson-Burch B."/>
            <person name="Coppel R.L."/>
            <person name="Rood J.I."/>
            <person name="Davies J.K."/>
            <person name="Adler B."/>
        </authorList>
    </citation>
    <scope>NUCLEOTIDE SEQUENCE [LARGE SCALE GENOMIC DNA]</scope>
    <source>
        <strain>L550</strain>
    </source>
</reference>
<gene>
    <name evidence="1" type="primary">htpX</name>
    <name type="ordered locus">LBL_4186</name>
</gene>
<accession>Q04WP4</accession>